<evidence type="ECO:0000305" key="1"/>
<feature type="chain" id="PRO_0000170329" description="RutC family protein aq_364">
    <location>
        <begin position="1"/>
        <end position="125"/>
    </location>
</feature>
<dbReference type="EMBL" id="AE000657">
    <property type="protein sequence ID" value="AAC06655.1"/>
    <property type="molecule type" value="Genomic_DNA"/>
</dbReference>
<dbReference type="PIR" id="E70332">
    <property type="entry name" value="E70332"/>
</dbReference>
<dbReference type="RefSeq" id="NP_213249.1">
    <property type="nucleotide sequence ID" value="NC_000918.1"/>
</dbReference>
<dbReference type="RefSeq" id="WP_010880187.1">
    <property type="nucleotide sequence ID" value="NC_000918.1"/>
</dbReference>
<dbReference type="SMR" id="O66689"/>
<dbReference type="FunCoup" id="O66689">
    <property type="interactions" value="391"/>
</dbReference>
<dbReference type="STRING" id="224324.aq_364"/>
<dbReference type="EnsemblBacteria" id="AAC06655">
    <property type="protein sequence ID" value="AAC06655"/>
    <property type="gene ID" value="aq_364"/>
</dbReference>
<dbReference type="KEGG" id="aae:aq_364"/>
<dbReference type="PATRIC" id="fig|224324.8.peg.294"/>
<dbReference type="eggNOG" id="COG0251">
    <property type="taxonomic scope" value="Bacteria"/>
</dbReference>
<dbReference type="HOGENOM" id="CLU_100715_7_0_0"/>
<dbReference type="InParanoid" id="O66689"/>
<dbReference type="OrthoDB" id="9803101at2"/>
<dbReference type="Proteomes" id="UP000000798">
    <property type="component" value="Chromosome"/>
</dbReference>
<dbReference type="GO" id="GO:0005829">
    <property type="term" value="C:cytosol"/>
    <property type="evidence" value="ECO:0000318"/>
    <property type="project" value="GO_Central"/>
</dbReference>
<dbReference type="GO" id="GO:0019239">
    <property type="term" value="F:deaminase activity"/>
    <property type="evidence" value="ECO:0000318"/>
    <property type="project" value="GO_Central"/>
</dbReference>
<dbReference type="CDD" id="cd00448">
    <property type="entry name" value="YjgF_YER057c_UK114_family"/>
    <property type="match status" value="1"/>
</dbReference>
<dbReference type="FunFam" id="3.30.1330.40:FF:000001">
    <property type="entry name" value="L-PSP family endoribonuclease"/>
    <property type="match status" value="1"/>
</dbReference>
<dbReference type="Gene3D" id="3.30.1330.40">
    <property type="entry name" value="RutC-like"/>
    <property type="match status" value="1"/>
</dbReference>
<dbReference type="InterPro" id="IPR006056">
    <property type="entry name" value="RidA"/>
</dbReference>
<dbReference type="InterPro" id="IPR019897">
    <property type="entry name" value="RidA_CS"/>
</dbReference>
<dbReference type="InterPro" id="IPR035959">
    <property type="entry name" value="RutC-like_sf"/>
</dbReference>
<dbReference type="InterPro" id="IPR006175">
    <property type="entry name" value="YjgF/YER057c/UK114"/>
</dbReference>
<dbReference type="NCBIfam" id="TIGR00004">
    <property type="entry name" value="Rid family detoxifying hydrolase"/>
    <property type="match status" value="1"/>
</dbReference>
<dbReference type="PANTHER" id="PTHR11803">
    <property type="entry name" value="2-IMINOBUTANOATE/2-IMINOPROPANOATE DEAMINASE RIDA"/>
    <property type="match status" value="1"/>
</dbReference>
<dbReference type="PANTHER" id="PTHR11803:SF39">
    <property type="entry name" value="2-IMINOBUTANOATE_2-IMINOPROPANOATE DEAMINASE"/>
    <property type="match status" value="1"/>
</dbReference>
<dbReference type="Pfam" id="PF01042">
    <property type="entry name" value="Ribonuc_L-PSP"/>
    <property type="match status" value="1"/>
</dbReference>
<dbReference type="SUPFAM" id="SSF55298">
    <property type="entry name" value="YjgF-like"/>
    <property type="match status" value="1"/>
</dbReference>
<dbReference type="PROSITE" id="PS01094">
    <property type="entry name" value="UPF0076"/>
    <property type="match status" value="1"/>
</dbReference>
<comment type="similarity">
    <text evidence="1">Belongs to the RutC family.</text>
</comment>
<reference key="1">
    <citation type="journal article" date="1998" name="Nature">
        <title>The complete genome of the hyperthermophilic bacterium Aquifex aeolicus.</title>
        <authorList>
            <person name="Deckert G."/>
            <person name="Warren P.V."/>
            <person name="Gaasterland T."/>
            <person name="Young W.G."/>
            <person name="Lenox A.L."/>
            <person name="Graham D.E."/>
            <person name="Overbeek R."/>
            <person name="Snead M.A."/>
            <person name="Keller M."/>
            <person name="Aujay M."/>
            <person name="Huber R."/>
            <person name="Feldman R.A."/>
            <person name="Short J.M."/>
            <person name="Olsen G.J."/>
            <person name="Swanson R.V."/>
        </authorList>
    </citation>
    <scope>NUCLEOTIDE SEQUENCE [LARGE SCALE GENOMIC DNA]</scope>
    <source>
        <strain>VF5</strain>
    </source>
</reference>
<name>Y364_AQUAE</name>
<organism>
    <name type="scientific">Aquifex aeolicus (strain VF5)</name>
    <dbReference type="NCBI Taxonomy" id="224324"/>
    <lineage>
        <taxon>Bacteria</taxon>
        <taxon>Pseudomonadati</taxon>
        <taxon>Aquificota</taxon>
        <taxon>Aquificia</taxon>
        <taxon>Aquificales</taxon>
        <taxon>Aquificaceae</taxon>
        <taxon>Aquifex</taxon>
    </lineage>
</organism>
<protein>
    <recommendedName>
        <fullName>RutC family protein aq_364</fullName>
    </recommendedName>
</protein>
<sequence>MREIKTPKAPVPVGPYSQAVEVNGFLFISGQIGINPETGKLVEGFKEQVIQIFKNVDAILEEAGLKRENIVKVTIYITDIKKFKELNEIYEDYFKDVSVKPARVTVGVKELPLNAEVEIEIVAVK</sequence>
<keyword id="KW-1185">Reference proteome</keyword>
<accession>O66689</accession>
<proteinExistence type="inferred from homology"/>
<gene>
    <name type="ordered locus">aq_364</name>
</gene>